<accession>Q8FHB1</accession>
<evidence type="ECO:0000250" key="1">
    <source>
        <dbReference type="UniProtKB" id="P0AFS3"/>
    </source>
</evidence>
<evidence type="ECO:0000255" key="2">
    <source>
        <dbReference type="PROSITE-ProRule" id="PRU10001"/>
    </source>
</evidence>
<evidence type="ECO:0000305" key="3"/>
<comment type="function">
    <text evidence="1">Catalyzes the reduction of dihydromonapterin to tetrahydromonapterin. Also has lower activity with dihydrofolate.</text>
</comment>
<comment type="catalytic activity">
    <reaction evidence="1">
        <text>(6S)-5,6,7,8-tetrahydrofolate + NADP(+) = 7,8-dihydrofolate + NADPH + H(+)</text>
        <dbReference type="Rhea" id="RHEA:15009"/>
        <dbReference type="ChEBI" id="CHEBI:15378"/>
        <dbReference type="ChEBI" id="CHEBI:57451"/>
        <dbReference type="ChEBI" id="CHEBI:57453"/>
        <dbReference type="ChEBI" id="CHEBI:57783"/>
        <dbReference type="ChEBI" id="CHEBI:58349"/>
        <dbReference type="EC" id="1.5.1.3"/>
    </reaction>
</comment>
<comment type="catalytic activity">
    <reaction evidence="1">
        <text>7,8-dihydromonapterin + NADPH + H(+) = 5,6,7,8-tetrahydromonapterin + NADP(+)</text>
        <dbReference type="Rhea" id="RHEA:34847"/>
        <dbReference type="ChEBI" id="CHEBI:15378"/>
        <dbReference type="ChEBI" id="CHEBI:57783"/>
        <dbReference type="ChEBI" id="CHEBI:58349"/>
        <dbReference type="ChEBI" id="CHEBI:71175"/>
        <dbReference type="ChEBI" id="CHEBI:71177"/>
        <dbReference type="EC" id="1.5.1.50"/>
    </reaction>
</comment>
<comment type="similarity">
    <text evidence="3">Belongs to the short-chain dehydrogenases/reductases (SDR) family. FolM subfamily.</text>
</comment>
<name>FOLM_ECOL6</name>
<keyword id="KW-0521">NADP</keyword>
<keyword id="KW-0554">One-carbon metabolism</keyword>
<keyword id="KW-0560">Oxidoreductase</keyword>
<keyword id="KW-1185">Reference proteome</keyword>
<sequence>MGKTQSLPILITGGGRRIGLALAWHFINQKQPVIVSYRTHYPAIDGLIKAGAQCIQADFSTNDGVMAFADEVLKSTHGLRAILHNASAWMAEKPGAPLTDVLACMMQIHVNTPYLLNHALERLLRGHGHAASDIIHFTDYVVERGSDKHIAYAASKAALDNMTRSFARKLAPEVKVNSIAPSLILFNEHDDAEYRQQALNKSLMKTAPGEKEVIDLVDYLLTSCFVTGRSLPLDGGRHLR</sequence>
<protein>
    <recommendedName>
        <fullName>Dihydromonapterin reductase</fullName>
        <shortName>H(2)-MPt reductase</shortName>
        <ecNumber evidence="1">1.5.1.50</ecNumber>
    </recommendedName>
    <alternativeName>
        <fullName>Dihydrofolate reductase</fullName>
        <shortName>DHFR</shortName>
        <ecNumber evidence="1">1.5.1.3</ecNumber>
    </alternativeName>
</protein>
<gene>
    <name type="primary">folM</name>
    <name type="ordered locus">c1998</name>
</gene>
<dbReference type="EC" id="1.5.1.50" evidence="1"/>
<dbReference type="EC" id="1.5.1.3" evidence="1"/>
<dbReference type="EMBL" id="AE014075">
    <property type="protein sequence ID" value="AAN80458.1"/>
    <property type="molecule type" value="Genomic_DNA"/>
</dbReference>
<dbReference type="RefSeq" id="WP_000520812.1">
    <property type="nucleotide sequence ID" value="NZ_CP051263.1"/>
</dbReference>
<dbReference type="SMR" id="Q8FHB1"/>
<dbReference type="STRING" id="199310.c1998"/>
<dbReference type="KEGG" id="ecc:c1998"/>
<dbReference type="eggNOG" id="COG1028">
    <property type="taxonomic scope" value="Bacteria"/>
</dbReference>
<dbReference type="HOGENOM" id="CLU_010194_1_3_6"/>
<dbReference type="BioCyc" id="ECOL199310:C1998-MONOMER"/>
<dbReference type="Proteomes" id="UP000001410">
    <property type="component" value="Chromosome"/>
</dbReference>
<dbReference type="GO" id="GO:0004146">
    <property type="term" value="F:dihydrofolate reductase activity"/>
    <property type="evidence" value="ECO:0007669"/>
    <property type="project" value="UniProtKB-EC"/>
</dbReference>
<dbReference type="GO" id="GO:0006730">
    <property type="term" value="P:one-carbon metabolic process"/>
    <property type="evidence" value="ECO:0007669"/>
    <property type="project" value="UniProtKB-KW"/>
</dbReference>
<dbReference type="CDD" id="cd05357">
    <property type="entry name" value="PR_SDR_c"/>
    <property type="match status" value="1"/>
</dbReference>
<dbReference type="FunFam" id="3.40.50.720:FF:000225">
    <property type="entry name" value="Dihydrofolate reductase FolM"/>
    <property type="match status" value="1"/>
</dbReference>
<dbReference type="Gene3D" id="3.40.50.720">
    <property type="entry name" value="NAD(P)-binding Rossmann-like Domain"/>
    <property type="match status" value="1"/>
</dbReference>
<dbReference type="InterPro" id="IPR036291">
    <property type="entry name" value="NAD(P)-bd_dom_sf"/>
</dbReference>
<dbReference type="InterPro" id="IPR020904">
    <property type="entry name" value="Sc_DH/Rdtase_CS"/>
</dbReference>
<dbReference type="InterPro" id="IPR002347">
    <property type="entry name" value="SDR_fam"/>
</dbReference>
<dbReference type="NCBIfam" id="NF005066">
    <property type="entry name" value="PRK06483.1"/>
    <property type="match status" value="1"/>
</dbReference>
<dbReference type="PANTHER" id="PTHR43639:SF6">
    <property type="entry name" value="DIHYDROMONAPTERIN REDUCTASE"/>
    <property type="match status" value="1"/>
</dbReference>
<dbReference type="PANTHER" id="PTHR43639">
    <property type="entry name" value="OXIDOREDUCTASE, SHORT-CHAIN DEHYDROGENASE/REDUCTASE FAMILY (AFU_ORTHOLOGUE AFUA_5G02870)"/>
    <property type="match status" value="1"/>
</dbReference>
<dbReference type="Pfam" id="PF13561">
    <property type="entry name" value="adh_short_C2"/>
    <property type="match status" value="1"/>
</dbReference>
<dbReference type="PRINTS" id="PR00081">
    <property type="entry name" value="GDHRDH"/>
</dbReference>
<dbReference type="SUPFAM" id="SSF51735">
    <property type="entry name" value="NAD(P)-binding Rossmann-fold domains"/>
    <property type="match status" value="1"/>
</dbReference>
<dbReference type="PROSITE" id="PS00061">
    <property type="entry name" value="ADH_SHORT"/>
    <property type="match status" value="1"/>
</dbReference>
<reference key="1">
    <citation type="journal article" date="2002" name="Proc. Natl. Acad. Sci. U.S.A.">
        <title>Extensive mosaic structure revealed by the complete genome sequence of uropathogenic Escherichia coli.</title>
        <authorList>
            <person name="Welch R.A."/>
            <person name="Burland V."/>
            <person name="Plunkett G. III"/>
            <person name="Redford P."/>
            <person name="Roesch P."/>
            <person name="Rasko D."/>
            <person name="Buckles E.L."/>
            <person name="Liou S.-R."/>
            <person name="Boutin A."/>
            <person name="Hackett J."/>
            <person name="Stroud D."/>
            <person name="Mayhew G.F."/>
            <person name="Rose D.J."/>
            <person name="Zhou S."/>
            <person name="Schwartz D.C."/>
            <person name="Perna N.T."/>
            <person name="Mobley H.L.T."/>
            <person name="Donnenberg M.S."/>
            <person name="Blattner F.R."/>
        </authorList>
    </citation>
    <scope>NUCLEOTIDE SEQUENCE [LARGE SCALE GENOMIC DNA]</scope>
    <source>
        <strain>CFT073 / ATCC 700928 / UPEC</strain>
    </source>
</reference>
<organism>
    <name type="scientific">Escherichia coli O6:H1 (strain CFT073 / ATCC 700928 / UPEC)</name>
    <dbReference type="NCBI Taxonomy" id="199310"/>
    <lineage>
        <taxon>Bacteria</taxon>
        <taxon>Pseudomonadati</taxon>
        <taxon>Pseudomonadota</taxon>
        <taxon>Gammaproteobacteria</taxon>
        <taxon>Enterobacterales</taxon>
        <taxon>Enterobacteriaceae</taxon>
        <taxon>Escherichia</taxon>
    </lineage>
</organism>
<proteinExistence type="inferred from homology"/>
<feature type="chain" id="PRO_0000339395" description="Dihydromonapterin reductase">
    <location>
        <begin position="1"/>
        <end position="240"/>
    </location>
</feature>
<feature type="active site" description="Proton acceptor" evidence="2">
    <location>
        <position position="152"/>
    </location>
</feature>